<reference key="1">
    <citation type="journal article" date="2010" name="PLoS ONE">
        <title>The complete multipartite genome sequence of Cupriavidus necator JMP134, a versatile pollutant degrader.</title>
        <authorList>
            <person name="Lykidis A."/>
            <person name="Perez-Pantoja D."/>
            <person name="Ledger T."/>
            <person name="Mavromatis K."/>
            <person name="Anderson I.J."/>
            <person name="Ivanova N.N."/>
            <person name="Hooper S.D."/>
            <person name="Lapidus A."/>
            <person name="Lucas S."/>
            <person name="Gonzalez B."/>
            <person name="Kyrpides N.C."/>
        </authorList>
    </citation>
    <scope>NUCLEOTIDE SEQUENCE [LARGE SCALE GENOMIC DNA]</scope>
    <source>
        <strain>JMP134 / LMG 1197</strain>
    </source>
</reference>
<accession>Q46WD2</accession>
<evidence type="ECO:0000255" key="1">
    <source>
        <dbReference type="HAMAP-Rule" id="MF_00362"/>
    </source>
</evidence>
<evidence type="ECO:0000305" key="2"/>
<sequence>MPLNIEDKKAVVAEVSAQVAKAQTIVVAEYRGIAVGDLTKLRATARQQGVYLRVLKNTLARRAVEGTPFAGLAEQMTGPLIYGISEDAVASAKVLNDFAKTNDKLVLRAGSYDGKVLDVNAVKALASIPSRDELIAQLLGVMQAPVSGFARLLGALAAKKSEGAPAEAEAPAA</sequence>
<gene>
    <name evidence="1" type="primary">rplJ</name>
    <name type="ordered locus">Reut_A3191</name>
</gene>
<comment type="function">
    <text evidence="1">Forms part of the ribosomal stalk, playing a central role in the interaction of the ribosome with GTP-bound translation factors.</text>
</comment>
<comment type="subunit">
    <text evidence="1">Part of the ribosomal stalk of the 50S ribosomal subunit. The N-terminus interacts with L11 and the large rRNA to form the base of the stalk. The C-terminus forms an elongated spine to which L12 dimers bind in a sequential fashion forming a multimeric L10(L12)X complex.</text>
</comment>
<comment type="similarity">
    <text evidence="1">Belongs to the universal ribosomal protein uL10 family.</text>
</comment>
<feature type="chain" id="PRO_0000234878" description="Large ribosomal subunit protein uL10">
    <location>
        <begin position="1"/>
        <end position="173"/>
    </location>
</feature>
<protein>
    <recommendedName>
        <fullName evidence="1">Large ribosomal subunit protein uL10</fullName>
    </recommendedName>
    <alternativeName>
        <fullName evidence="2">50S ribosomal protein L10</fullName>
    </alternativeName>
</protein>
<proteinExistence type="inferred from homology"/>
<dbReference type="EMBL" id="CP000090">
    <property type="protein sequence ID" value="AAZ62551.1"/>
    <property type="molecule type" value="Genomic_DNA"/>
</dbReference>
<dbReference type="SMR" id="Q46WD2"/>
<dbReference type="STRING" id="264198.Reut_A3191"/>
<dbReference type="KEGG" id="reu:Reut_A3191"/>
<dbReference type="eggNOG" id="COG0244">
    <property type="taxonomic scope" value="Bacteria"/>
</dbReference>
<dbReference type="HOGENOM" id="CLU_092227_0_1_4"/>
<dbReference type="OrthoDB" id="9808307at2"/>
<dbReference type="GO" id="GO:1990904">
    <property type="term" value="C:ribonucleoprotein complex"/>
    <property type="evidence" value="ECO:0007669"/>
    <property type="project" value="UniProtKB-KW"/>
</dbReference>
<dbReference type="GO" id="GO:0005840">
    <property type="term" value="C:ribosome"/>
    <property type="evidence" value="ECO:0007669"/>
    <property type="project" value="UniProtKB-KW"/>
</dbReference>
<dbReference type="GO" id="GO:0070180">
    <property type="term" value="F:large ribosomal subunit rRNA binding"/>
    <property type="evidence" value="ECO:0007669"/>
    <property type="project" value="UniProtKB-UniRule"/>
</dbReference>
<dbReference type="GO" id="GO:0006412">
    <property type="term" value="P:translation"/>
    <property type="evidence" value="ECO:0007669"/>
    <property type="project" value="UniProtKB-UniRule"/>
</dbReference>
<dbReference type="CDD" id="cd05797">
    <property type="entry name" value="Ribosomal_L10"/>
    <property type="match status" value="1"/>
</dbReference>
<dbReference type="Gene3D" id="3.30.70.1730">
    <property type="match status" value="1"/>
</dbReference>
<dbReference type="Gene3D" id="6.10.250.290">
    <property type="match status" value="1"/>
</dbReference>
<dbReference type="HAMAP" id="MF_00362">
    <property type="entry name" value="Ribosomal_uL10"/>
    <property type="match status" value="1"/>
</dbReference>
<dbReference type="InterPro" id="IPR001790">
    <property type="entry name" value="Ribosomal_uL10"/>
</dbReference>
<dbReference type="InterPro" id="IPR043141">
    <property type="entry name" value="Ribosomal_uL10-like_sf"/>
</dbReference>
<dbReference type="InterPro" id="IPR022973">
    <property type="entry name" value="Ribosomal_uL10_bac"/>
</dbReference>
<dbReference type="InterPro" id="IPR047865">
    <property type="entry name" value="Ribosomal_uL10_bac_type"/>
</dbReference>
<dbReference type="NCBIfam" id="NF000955">
    <property type="entry name" value="PRK00099.1-1"/>
    <property type="match status" value="1"/>
</dbReference>
<dbReference type="PANTHER" id="PTHR11560">
    <property type="entry name" value="39S RIBOSOMAL PROTEIN L10, MITOCHONDRIAL"/>
    <property type="match status" value="1"/>
</dbReference>
<dbReference type="Pfam" id="PF00466">
    <property type="entry name" value="Ribosomal_L10"/>
    <property type="match status" value="1"/>
</dbReference>
<dbReference type="SUPFAM" id="SSF160369">
    <property type="entry name" value="Ribosomal protein L10-like"/>
    <property type="match status" value="1"/>
</dbReference>
<keyword id="KW-0687">Ribonucleoprotein</keyword>
<keyword id="KW-0689">Ribosomal protein</keyword>
<keyword id="KW-0694">RNA-binding</keyword>
<keyword id="KW-0699">rRNA-binding</keyword>
<name>RL10_CUPPJ</name>
<organism>
    <name type="scientific">Cupriavidus pinatubonensis (strain JMP 134 / LMG 1197)</name>
    <name type="common">Cupriavidus necator (strain JMP 134)</name>
    <dbReference type="NCBI Taxonomy" id="264198"/>
    <lineage>
        <taxon>Bacteria</taxon>
        <taxon>Pseudomonadati</taxon>
        <taxon>Pseudomonadota</taxon>
        <taxon>Betaproteobacteria</taxon>
        <taxon>Burkholderiales</taxon>
        <taxon>Burkholderiaceae</taxon>
        <taxon>Cupriavidus</taxon>
    </lineage>
</organism>